<gene>
    <name type="primary">hofM</name>
    <name type="synonym">yrfD</name>
    <name type="ordered locus">b3395</name>
    <name type="ordered locus">JW5693</name>
</gene>
<keyword id="KW-1185">Reference proteome</keyword>
<protein>
    <recommendedName>
        <fullName>DNA utilization protein HofM</fullName>
    </recommendedName>
</protein>
<dbReference type="EMBL" id="U18997">
    <property type="protein sequence ID" value="AAA58192.1"/>
    <property type="status" value="ALT_INIT"/>
    <property type="molecule type" value="Genomic_DNA"/>
</dbReference>
<dbReference type="EMBL" id="U00096">
    <property type="protein sequence ID" value="AAC76420.2"/>
    <property type="molecule type" value="Genomic_DNA"/>
</dbReference>
<dbReference type="EMBL" id="AP009048">
    <property type="protein sequence ID" value="BAE77896.1"/>
    <property type="molecule type" value="Genomic_DNA"/>
</dbReference>
<dbReference type="PIR" id="F65134">
    <property type="entry name" value="F65134"/>
</dbReference>
<dbReference type="RefSeq" id="NP_417854.4">
    <property type="nucleotide sequence ID" value="NC_000913.3"/>
</dbReference>
<dbReference type="RefSeq" id="WP_001295166.1">
    <property type="nucleotide sequence ID" value="NZ_SSZK01000008.1"/>
</dbReference>
<dbReference type="SMR" id="P45753"/>
<dbReference type="BioGRID" id="4260909">
    <property type="interactions" value="10"/>
</dbReference>
<dbReference type="DIP" id="DIP-12921N"/>
<dbReference type="FunCoup" id="P45753">
    <property type="interactions" value="50"/>
</dbReference>
<dbReference type="IntAct" id="P45753">
    <property type="interactions" value="2"/>
</dbReference>
<dbReference type="STRING" id="511145.b3395"/>
<dbReference type="PaxDb" id="511145-b3395"/>
<dbReference type="EnsemblBacteria" id="AAC76420">
    <property type="protein sequence ID" value="AAC76420"/>
    <property type="gene ID" value="b3395"/>
</dbReference>
<dbReference type="GeneID" id="947908"/>
<dbReference type="KEGG" id="ecj:JW5693"/>
<dbReference type="KEGG" id="eco:b3395"/>
<dbReference type="KEGG" id="ecoc:C3026_18420"/>
<dbReference type="PATRIC" id="fig|1411691.4.peg.3335"/>
<dbReference type="EchoBASE" id="EB2761"/>
<dbReference type="eggNOG" id="COG4972">
    <property type="taxonomic scope" value="Bacteria"/>
</dbReference>
<dbReference type="HOGENOM" id="CLU_083891_1_0_6"/>
<dbReference type="InParanoid" id="P45753"/>
<dbReference type="OMA" id="DGWQLRH"/>
<dbReference type="OrthoDB" id="6447548at2"/>
<dbReference type="PhylomeDB" id="P45753"/>
<dbReference type="BioCyc" id="EcoCyc:G7739-MONOMER"/>
<dbReference type="PRO" id="PR:P45753"/>
<dbReference type="Proteomes" id="UP000000625">
    <property type="component" value="Chromosome"/>
</dbReference>
<dbReference type="GO" id="GO:0015976">
    <property type="term" value="P:carbon utilization"/>
    <property type="evidence" value="ECO:0000315"/>
    <property type="project" value="EcoCyc"/>
</dbReference>
<dbReference type="GO" id="GO:0006308">
    <property type="term" value="P:DNA catabolic process"/>
    <property type="evidence" value="ECO:0000315"/>
    <property type="project" value="EcoCyc"/>
</dbReference>
<dbReference type="FunFam" id="3.30.420.380:FF:000001">
    <property type="entry name" value="DNA utilization protein HofM"/>
    <property type="match status" value="1"/>
</dbReference>
<dbReference type="Gene3D" id="3.30.420.380">
    <property type="match status" value="1"/>
</dbReference>
<dbReference type="InterPro" id="IPR043129">
    <property type="entry name" value="ATPase_NBD"/>
</dbReference>
<dbReference type="SUPFAM" id="SSF53067">
    <property type="entry name" value="Actin-like ATPase domain"/>
    <property type="match status" value="1"/>
</dbReference>
<name>HOFM_ECOLI</name>
<evidence type="ECO:0000269" key="1">
    <source>
    </source>
</evidence>
<evidence type="ECO:0000305" key="2"/>
<proteinExistence type="predicted"/>
<comment type="function">
    <text evidence="1">Required for the use of extracellular DNA as a nutrient.</text>
</comment>
<comment type="disruption phenotype">
    <text evidence="1">Mutants are unable to use DNA as a sole carbon and energy source. They do not show a growth disadvantage in stationary phase growth in cocultures with wild-type.</text>
</comment>
<comment type="sequence caution" evidence="2">
    <conflict type="erroneous initiation">
        <sequence resource="EMBL-CDS" id="AAA58192"/>
    </conflict>
    <text>Extended N-terminus.</text>
</comment>
<accession>P45753</accession>
<accession>Q2M760</accession>
<sequence>MAFKIWQIGLHLQQQEAVAVAIVRGAKECFLQRWWRLPLENDIIKDGRIVDAQQLAKTLLPWSRELPQRHHIMLAFPASRTLQRSFPRPSMSLGEREQTAWLSGTMARELDMDPDSLRFDYSEDSLSPAYNVTAAQSKELATLLTLAERLRVHVSAITPDASALQRFLPFLPSHQQCLAWRDNEQWLWATRYSWGRKLAVGMTSAKELAAALSVDPESVAICGEGGFDPWEAVSVRQPPLPPPGGDFAIALGLALGKAY</sequence>
<organism>
    <name type="scientific">Escherichia coli (strain K12)</name>
    <dbReference type="NCBI Taxonomy" id="83333"/>
    <lineage>
        <taxon>Bacteria</taxon>
        <taxon>Pseudomonadati</taxon>
        <taxon>Pseudomonadota</taxon>
        <taxon>Gammaproteobacteria</taxon>
        <taxon>Enterobacterales</taxon>
        <taxon>Enterobacteriaceae</taxon>
        <taxon>Escherichia</taxon>
    </lineage>
</organism>
<reference key="1">
    <citation type="journal article" date="1997" name="Science">
        <title>The complete genome sequence of Escherichia coli K-12.</title>
        <authorList>
            <person name="Blattner F.R."/>
            <person name="Plunkett G. III"/>
            <person name="Bloch C.A."/>
            <person name="Perna N.T."/>
            <person name="Burland V."/>
            <person name="Riley M."/>
            <person name="Collado-Vides J."/>
            <person name="Glasner J.D."/>
            <person name="Rode C.K."/>
            <person name="Mayhew G.F."/>
            <person name="Gregor J."/>
            <person name="Davis N.W."/>
            <person name="Kirkpatrick H.A."/>
            <person name="Goeden M.A."/>
            <person name="Rose D.J."/>
            <person name="Mau B."/>
            <person name="Shao Y."/>
        </authorList>
    </citation>
    <scope>NUCLEOTIDE SEQUENCE [LARGE SCALE GENOMIC DNA]</scope>
    <source>
        <strain>K12 / MG1655 / ATCC 47076</strain>
    </source>
</reference>
<reference key="2">
    <citation type="journal article" date="2006" name="Mol. Syst. Biol.">
        <title>Highly accurate genome sequences of Escherichia coli K-12 strains MG1655 and W3110.</title>
        <authorList>
            <person name="Hayashi K."/>
            <person name="Morooka N."/>
            <person name="Yamamoto Y."/>
            <person name="Fujita K."/>
            <person name="Isono K."/>
            <person name="Choi S."/>
            <person name="Ohtsubo E."/>
            <person name="Baba T."/>
            <person name="Wanner B.L."/>
            <person name="Mori H."/>
            <person name="Horiuchi T."/>
        </authorList>
    </citation>
    <scope>NUCLEOTIDE SEQUENCE [LARGE SCALE GENOMIC DNA]</scope>
    <source>
        <strain>K12 / W3110 / ATCC 27325 / DSM 5911</strain>
    </source>
</reference>
<reference key="3">
    <citation type="journal article" date="2006" name="J. Bacteriol.">
        <title>Escherichia coli competence gene homologs are essential for competitive fitness and the use of DNA as a nutrient.</title>
        <authorList>
            <person name="Palchevskiy V."/>
            <person name="Finkel S.E."/>
        </authorList>
    </citation>
    <scope>FUNCTION</scope>
    <scope>DISRUPTION PHENOTYPE</scope>
    <source>
        <strain>K12 / W3110 / ZK126</strain>
    </source>
</reference>
<feature type="chain" id="PRO_0000169541" description="DNA utilization protein HofM">
    <location>
        <begin position="1"/>
        <end position="259"/>
    </location>
</feature>